<organism>
    <name type="scientific">Mus musculus</name>
    <name type="common">Mouse</name>
    <dbReference type="NCBI Taxonomy" id="10090"/>
    <lineage>
        <taxon>Eukaryota</taxon>
        <taxon>Metazoa</taxon>
        <taxon>Chordata</taxon>
        <taxon>Craniata</taxon>
        <taxon>Vertebrata</taxon>
        <taxon>Euteleostomi</taxon>
        <taxon>Mammalia</taxon>
        <taxon>Eutheria</taxon>
        <taxon>Euarchontoglires</taxon>
        <taxon>Glires</taxon>
        <taxon>Rodentia</taxon>
        <taxon>Myomorpha</taxon>
        <taxon>Muroidea</taxon>
        <taxon>Muridae</taxon>
        <taxon>Murinae</taxon>
        <taxon>Mus</taxon>
        <taxon>Mus</taxon>
    </lineage>
</organism>
<feature type="chain" id="PRO_0000251717" description="Transmembrane protein 125">
    <location>
        <begin position="1"/>
        <end position="216"/>
    </location>
</feature>
<feature type="transmembrane region" description="Helical" evidence="1">
    <location>
        <begin position="32"/>
        <end position="52"/>
    </location>
</feature>
<feature type="transmembrane region" description="Helical" evidence="1">
    <location>
        <begin position="65"/>
        <end position="85"/>
    </location>
</feature>
<feature type="transmembrane region" description="Helical" evidence="1">
    <location>
        <begin position="111"/>
        <end position="131"/>
    </location>
</feature>
<feature type="transmembrane region" description="Helical" evidence="1">
    <location>
        <begin position="144"/>
        <end position="164"/>
    </location>
</feature>
<feature type="sequence conflict" description="In Ref. 2; BAC34092." evidence="2" ref="2">
    <original>S</original>
    <variation>T</variation>
    <location>
        <position position="57"/>
    </location>
</feature>
<feature type="sequence conflict" description="In Ref. 2; BAC34092." evidence="2" ref="2">
    <original>A</original>
    <variation>P</variation>
    <location>
        <position position="66"/>
    </location>
</feature>
<feature type="sequence conflict" description="In Ref. 2; BAC34092." evidence="2" ref="2">
    <original>K</original>
    <variation>N</variation>
    <location>
        <position position="81"/>
    </location>
</feature>
<feature type="sequence conflict" description="In Ref. 2; BAC34092." evidence="2" ref="2">
    <original>V</original>
    <variation>D</variation>
    <location>
        <position position="112"/>
    </location>
</feature>
<feature type="sequence conflict" description="In Ref. 2; BAC34092." evidence="2" ref="2">
    <original>G</original>
    <variation>S</variation>
    <location>
        <position position="188"/>
    </location>
</feature>
<sequence>MSQQASVGRGLPPDVLAEQVELWWSQQPRRSLLCFSVAVILVAGCGAGGVALLSSTSSRSGEWRLAVGTVLCLLALLVLVKQLMSSAVQDMNCIRQAQHVALLRSGGGADAVVVLLSGFVLLVTGLTLAGLAAAPAPARPLAAMLSVGITLASLGSVLLLGLLLYQVGVSGHCPPICTEAFSAQNGHGDNSSIFSISGQLSSGQRHETTSSIASLI</sequence>
<reference key="1">
    <citation type="journal article" date="2009" name="PLoS Biol.">
        <title>Lineage-specific biology revealed by a finished genome assembly of the mouse.</title>
        <authorList>
            <person name="Church D.M."/>
            <person name="Goodstadt L."/>
            <person name="Hillier L.W."/>
            <person name="Zody M.C."/>
            <person name="Goldstein S."/>
            <person name="She X."/>
            <person name="Bult C.J."/>
            <person name="Agarwala R."/>
            <person name="Cherry J.L."/>
            <person name="DiCuccio M."/>
            <person name="Hlavina W."/>
            <person name="Kapustin Y."/>
            <person name="Meric P."/>
            <person name="Maglott D."/>
            <person name="Birtle Z."/>
            <person name="Marques A.C."/>
            <person name="Graves T."/>
            <person name="Zhou S."/>
            <person name="Teague B."/>
            <person name="Potamousis K."/>
            <person name="Churas C."/>
            <person name="Place M."/>
            <person name="Herschleb J."/>
            <person name="Runnheim R."/>
            <person name="Forrest D."/>
            <person name="Amos-Landgraf J."/>
            <person name="Schwartz D.C."/>
            <person name="Cheng Z."/>
            <person name="Lindblad-Toh K."/>
            <person name="Eichler E.E."/>
            <person name="Ponting C.P."/>
        </authorList>
    </citation>
    <scope>NUCLEOTIDE SEQUENCE [LARGE SCALE GENOMIC DNA]</scope>
</reference>
<reference key="2">
    <citation type="journal article" date="2005" name="Science">
        <title>The transcriptional landscape of the mammalian genome.</title>
        <authorList>
            <person name="Carninci P."/>
            <person name="Kasukawa T."/>
            <person name="Katayama S."/>
            <person name="Gough J."/>
            <person name="Frith M.C."/>
            <person name="Maeda N."/>
            <person name="Oyama R."/>
            <person name="Ravasi T."/>
            <person name="Lenhard B."/>
            <person name="Wells C."/>
            <person name="Kodzius R."/>
            <person name="Shimokawa K."/>
            <person name="Bajic V.B."/>
            <person name="Brenner S.E."/>
            <person name="Batalov S."/>
            <person name="Forrest A.R."/>
            <person name="Zavolan M."/>
            <person name="Davis M.J."/>
            <person name="Wilming L.G."/>
            <person name="Aidinis V."/>
            <person name="Allen J.E."/>
            <person name="Ambesi-Impiombato A."/>
            <person name="Apweiler R."/>
            <person name="Aturaliya R.N."/>
            <person name="Bailey T.L."/>
            <person name="Bansal M."/>
            <person name="Baxter L."/>
            <person name="Beisel K.W."/>
            <person name="Bersano T."/>
            <person name="Bono H."/>
            <person name="Chalk A.M."/>
            <person name="Chiu K.P."/>
            <person name="Choudhary V."/>
            <person name="Christoffels A."/>
            <person name="Clutterbuck D.R."/>
            <person name="Crowe M.L."/>
            <person name="Dalla E."/>
            <person name="Dalrymple B.P."/>
            <person name="de Bono B."/>
            <person name="Della Gatta G."/>
            <person name="di Bernardo D."/>
            <person name="Down T."/>
            <person name="Engstrom P."/>
            <person name="Fagiolini M."/>
            <person name="Faulkner G."/>
            <person name="Fletcher C.F."/>
            <person name="Fukushima T."/>
            <person name="Furuno M."/>
            <person name="Futaki S."/>
            <person name="Gariboldi M."/>
            <person name="Georgii-Hemming P."/>
            <person name="Gingeras T.R."/>
            <person name="Gojobori T."/>
            <person name="Green R.E."/>
            <person name="Gustincich S."/>
            <person name="Harbers M."/>
            <person name="Hayashi Y."/>
            <person name="Hensch T.K."/>
            <person name="Hirokawa N."/>
            <person name="Hill D."/>
            <person name="Huminiecki L."/>
            <person name="Iacono M."/>
            <person name="Ikeo K."/>
            <person name="Iwama A."/>
            <person name="Ishikawa T."/>
            <person name="Jakt M."/>
            <person name="Kanapin A."/>
            <person name="Katoh M."/>
            <person name="Kawasawa Y."/>
            <person name="Kelso J."/>
            <person name="Kitamura H."/>
            <person name="Kitano H."/>
            <person name="Kollias G."/>
            <person name="Krishnan S.P."/>
            <person name="Kruger A."/>
            <person name="Kummerfeld S.K."/>
            <person name="Kurochkin I.V."/>
            <person name="Lareau L.F."/>
            <person name="Lazarevic D."/>
            <person name="Lipovich L."/>
            <person name="Liu J."/>
            <person name="Liuni S."/>
            <person name="McWilliam S."/>
            <person name="Madan Babu M."/>
            <person name="Madera M."/>
            <person name="Marchionni L."/>
            <person name="Matsuda H."/>
            <person name="Matsuzawa S."/>
            <person name="Miki H."/>
            <person name="Mignone F."/>
            <person name="Miyake S."/>
            <person name="Morris K."/>
            <person name="Mottagui-Tabar S."/>
            <person name="Mulder N."/>
            <person name="Nakano N."/>
            <person name="Nakauchi H."/>
            <person name="Ng P."/>
            <person name="Nilsson R."/>
            <person name="Nishiguchi S."/>
            <person name="Nishikawa S."/>
            <person name="Nori F."/>
            <person name="Ohara O."/>
            <person name="Okazaki Y."/>
            <person name="Orlando V."/>
            <person name="Pang K.C."/>
            <person name="Pavan W.J."/>
            <person name="Pavesi G."/>
            <person name="Pesole G."/>
            <person name="Petrovsky N."/>
            <person name="Piazza S."/>
            <person name="Reed J."/>
            <person name="Reid J.F."/>
            <person name="Ring B.Z."/>
            <person name="Ringwald M."/>
            <person name="Rost B."/>
            <person name="Ruan Y."/>
            <person name="Salzberg S.L."/>
            <person name="Sandelin A."/>
            <person name="Schneider C."/>
            <person name="Schoenbach C."/>
            <person name="Sekiguchi K."/>
            <person name="Semple C.A."/>
            <person name="Seno S."/>
            <person name="Sessa L."/>
            <person name="Sheng Y."/>
            <person name="Shibata Y."/>
            <person name="Shimada H."/>
            <person name="Shimada K."/>
            <person name="Silva D."/>
            <person name="Sinclair B."/>
            <person name="Sperling S."/>
            <person name="Stupka E."/>
            <person name="Sugiura K."/>
            <person name="Sultana R."/>
            <person name="Takenaka Y."/>
            <person name="Taki K."/>
            <person name="Tammoja K."/>
            <person name="Tan S.L."/>
            <person name="Tang S."/>
            <person name="Taylor M.S."/>
            <person name="Tegner J."/>
            <person name="Teichmann S.A."/>
            <person name="Ueda H.R."/>
            <person name="van Nimwegen E."/>
            <person name="Verardo R."/>
            <person name="Wei C.L."/>
            <person name="Yagi K."/>
            <person name="Yamanishi H."/>
            <person name="Zabarovsky E."/>
            <person name="Zhu S."/>
            <person name="Zimmer A."/>
            <person name="Hide W."/>
            <person name="Bult C."/>
            <person name="Grimmond S.M."/>
            <person name="Teasdale R.D."/>
            <person name="Liu E.T."/>
            <person name="Brusic V."/>
            <person name="Quackenbush J."/>
            <person name="Wahlestedt C."/>
            <person name="Mattick J.S."/>
            <person name="Hume D.A."/>
            <person name="Kai C."/>
            <person name="Sasaki D."/>
            <person name="Tomaru Y."/>
            <person name="Fukuda S."/>
            <person name="Kanamori-Katayama M."/>
            <person name="Suzuki M."/>
            <person name="Aoki J."/>
            <person name="Arakawa T."/>
            <person name="Iida J."/>
            <person name="Imamura K."/>
            <person name="Itoh M."/>
            <person name="Kato T."/>
            <person name="Kawaji H."/>
            <person name="Kawagashira N."/>
            <person name="Kawashima T."/>
            <person name="Kojima M."/>
            <person name="Kondo S."/>
            <person name="Konno H."/>
            <person name="Nakano K."/>
            <person name="Ninomiya N."/>
            <person name="Nishio T."/>
            <person name="Okada M."/>
            <person name="Plessy C."/>
            <person name="Shibata K."/>
            <person name="Shiraki T."/>
            <person name="Suzuki S."/>
            <person name="Tagami M."/>
            <person name="Waki K."/>
            <person name="Watahiki A."/>
            <person name="Okamura-Oho Y."/>
            <person name="Suzuki H."/>
            <person name="Kawai J."/>
            <person name="Hayashizaki Y."/>
        </authorList>
    </citation>
    <scope>NUCLEOTIDE SEQUENCE [LARGE SCALE MRNA]</scope>
    <source>
        <strain>C57BL/6J</strain>
        <tissue>Hypothalamus</tissue>
        <tissue>Liver cancer</tissue>
        <tissue>Medulla oblongata</tissue>
        <tissue>Spinal cord</tissue>
    </source>
</reference>
<reference key="3">
    <citation type="journal article" date="2004" name="Genome Res.">
        <title>The status, quality, and expansion of the NIH full-length cDNA project: the Mammalian Gene Collection (MGC).</title>
        <authorList>
            <consortium name="The MGC Project Team"/>
        </authorList>
    </citation>
    <scope>NUCLEOTIDE SEQUENCE [LARGE SCALE MRNA]</scope>
    <source>
        <tissue>Mammary gland</tissue>
    </source>
</reference>
<protein>
    <recommendedName>
        <fullName>Transmembrane protein 125</fullName>
    </recommendedName>
</protein>
<accession>Q8CHQ6</accession>
<accession>A2BI56</accession>
<accession>Q8BHY6</accession>
<keyword id="KW-0472">Membrane</keyword>
<keyword id="KW-1185">Reference proteome</keyword>
<keyword id="KW-0812">Transmembrane</keyword>
<keyword id="KW-1133">Transmembrane helix</keyword>
<gene>
    <name type="primary">Tmem125</name>
</gene>
<proteinExistence type="evidence at transcript level"/>
<name>TM125_MOUSE</name>
<comment type="subcellular location">
    <subcellularLocation>
        <location evidence="2">Membrane</location>
        <topology evidence="2">Multi-pass membrane protein</topology>
    </subcellularLocation>
</comment>
<comment type="sequence caution" evidence="2">
    <conflict type="erroneous initiation">
        <sequence resource="EMBL-CDS" id="AAH39806"/>
    </conflict>
</comment>
<comment type="sequence caution" evidence="2">
    <conflict type="frameshift">
        <sequence resource="EMBL-CDS" id="BAC34092"/>
    </conflict>
</comment>
<evidence type="ECO:0000255" key="1"/>
<evidence type="ECO:0000305" key="2"/>
<dbReference type="EMBL" id="BX842610">
    <property type="status" value="NOT_ANNOTATED_CDS"/>
    <property type="molecule type" value="Genomic_DNA"/>
</dbReference>
<dbReference type="EMBL" id="AK050146">
    <property type="protein sequence ID" value="BAC34092.1"/>
    <property type="status" value="ALT_FRAME"/>
    <property type="molecule type" value="mRNA"/>
</dbReference>
<dbReference type="EMBL" id="AK160304">
    <property type="protein sequence ID" value="BAE35732.1"/>
    <property type="molecule type" value="mRNA"/>
</dbReference>
<dbReference type="EMBL" id="AK162907">
    <property type="protein sequence ID" value="BAE37110.1"/>
    <property type="molecule type" value="mRNA"/>
</dbReference>
<dbReference type="EMBL" id="AK162829">
    <property type="protein sequence ID" value="BAE37073.1"/>
    <property type="molecule type" value="mRNA"/>
</dbReference>
<dbReference type="EMBL" id="BC039806">
    <property type="protein sequence ID" value="AAH39806.2"/>
    <property type="status" value="ALT_INIT"/>
    <property type="molecule type" value="mRNA"/>
</dbReference>
<dbReference type="CCDS" id="CCDS51285.1"/>
<dbReference type="RefSeq" id="NP_759015.2">
    <property type="nucleotide sequence ID" value="NM_172383.3"/>
</dbReference>
<dbReference type="RefSeq" id="XP_006503076.1">
    <property type="nucleotide sequence ID" value="XM_006503013.5"/>
</dbReference>
<dbReference type="RefSeq" id="XP_006503077.1">
    <property type="nucleotide sequence ID" value="XM_006503014.4"/>
</dbReference>
<dbReference type="RefSeq" id="XP_011238797.1">
    <property type="nucleotide sequence ID" value="XM_011240495.2"/>
</dbReference>
<dbReference type="RefSeq" id="XP_011238798.1">
    <property type="nucleotide sequence ID" value="XM_011240496.4"/>
</dbReference>
<dbReference type="RefSeq" id="XP_017175638.1">
    <property type="nucleotide sequence ID" value="XM_017320149.3"/>
</dbReference>
<dbReference type="BioGRID" id="231001">
    <property type="interactions" value="1"/>
</dbReference>
<dbReference type="FunCoup" id="Q8CHQ6">
    <property type="interactions" value="1"/>
</dbReference>
<dbReference type="STRING" id="10090.ENSMUSP00000063157"/>
<dbReference type="PhosphoSitePlus" id="Q8CHQ6"/>
<dbReference type="PaxDb" id="10090-ENSMUSP00000063157"/>
<dbReference type="ProteomicsDB" id="259524"/>
<dbReference type="Antibodypedia" id="18202">
    <property type="antibodies" value="34 antibodies from 9 providers"/>
</dbReference>
<dbReference type="Ensembl" id="ENSMUST00000060214.10">
    <property type="protein sequence ID" value="ENSMUSP00000063157.4"/>
    <property type="gene ID" value="ENSMUSG00000050854.10"/>
</dbReference>
<dbReference type="GeneID" id="230678"/>
<dbReference type="KEGG" id="mmu:230678"/>
<dbReference type="UCSC" id="uc012dkb.1">
    <property type="organism name" value="mouse"/>
</dbReference>
<dbReference type="AGR" id="MGI:1923409"/>
<dbReference type="CTD" id="128218"/>
<dbReference type="MGI" id="MGI:1923409">
    <property type="gene designation" value="Tmem125"/>
</dbReference>
<dbReference type="VEuPathDB" id="HostDB:ENSMUSG00000050854"/>
<dbReference type="eggNOG" id="ENOG502S0IK">
    <property type="taxonomic scope" value="Eukaryota"/>
</dbReference>
<dbReference type="GeneTree" id="ENSGT00390000003015"/>
<dbReference type="HOGENOM" id="CLU_118850_0_0_1"/>
<dbReference type="InParanoid" id="Q8CHQ6"/>
<dbReference type="OMA" id="MNCVRQP"/>
<dbReference type="OrthoDB" id="8950495at2759"/>
<dbReference type="TreeFam" id="TF332758"/>
<dbReference type="BioGRID-ORCS" id="230678">
    <property type="hits" value="2 hits in 76 CRISPR screens"/>
</dbReference>
<dbReference type="PRO" id="PR:Q8CHQ6"/>
<dbReference type="Proteomes" id="UP000000589">
    <property type="component" value="Chromosome 4"/>
</dbReference>
<dbReference type="RNAct" id="Q8CHQ6">
    <property type="molecule type" value="protein"/>
</dbReference>
<dbReference type="Bgee" id="ENSMUSG00000050854">
    <property type="expression patterns" value="Expressed in lumbar subsegment of spinal cord and 147 other cell types or tissues"/>
</dbReference>
<dbReference type="ExpressionAtlas" id="Q8CHQ6">
    <property type="expression patterns" value="baseline and differential"/>
</dbReference>
<dbReference type="GO" id="GO:0016020">
    <property type="term" value="C:membrane"/>
    <property type="evidence" value="ECO:0007669"/>
    <property type="project" value="UniProtKB-SubCell"/>
</dbReference>
<dbReference type="InterPro" id="IPR028165">
    <property type="entry name" value="TMEM125"/>
</dbReference>
<dbReference type="PANTHER" id="PTHR31416">
    <property type="entry name" value="TRANSMEMBRANE PROTEIN 125"/>
    <property type="match status" value="1"/>
</dbReference>
<dbReference type="PANTHER" id="PTHR31416:SF1">
    <property type="entry name" value="TRANSMEMBRANE PROTEIN 125"/>
    <property type="match status" value="1"/>
</dbReference>
<dbReference type="Pfam" id="PF15109">
    <property type="entry name" value="TMEM125"/>
    <property type="match status" value="1"/>
</dbReference>